<proteinExistence type="inferred from homology"/>
<comment type="function">
    <text evidence="3">Together with its co-chaperonin GroES, plays an essential role in assisting protein folding. The GroEL-GroES system forms a nano-cage that allows encapsulation of the non-native substrate proteins and provides a physical environment optimized to promote and accelerate protein folding.</text>
</comment>
<comment type="catalytic activity">
    <reaction evidence="3">
        <text>ATP + H2O + a folded polypeptide = ADP + phosphate + an unfolded polypeptide.</text>
        <dbReference type="EC" id="5.6.1.7"/>
    </reaction>
</comment>
<comment type="subunit">
    <text evidence="3">Forms a cylinder of 14 subunits composed of two heptameric rings stacked back-to-back. Interacts with the co-chaperonin GroES.</text>
</comment>
<comment type="subcellular location">
    <subcellularLocation>
        <location evidence="2">Secreted</location>
        <location evidence="2">Capsule</location>
    </subcellularLocation>
    <subcellularLocation>
        <location evidence="2">Cell surface</location>
    </subcellularLocation>
    <subcellularLocation>
        <location evidence="2">Secreted</location>
        <location evidence="2">Cell wall</location>
    </subcellularLocation>
</comment>
<comment type="similarity">
    <text evidence="3">Belongs to the chaperonin (HSP60) family.</text>
</comment>
<reference key="1">
    <citation type="journal article" date="2002" name="J. Bacteriol.">
        <title>Whole-genome comparison of Mycobacterium tuberculosis clinical and laboratory strains.</title>
        <authorList>
            <person name="Fleischmann R.D."/>
            <person name="Alland D."/>
            <person name="Eisen J.A."/>
            <person name="Carpenter L."/>
            <person name="White O."/>
            <person name="Peterson J.D."/>
            <person name="DeBoy R.T."/>
            <person name="Dodson R.J."/>
            <person name="Gwinn M.L."/>
            <person name="Haft D.H."/>
            <person name="Hickey E.K."/>
            <person name="Kolonay J.F."/>
            <person name="Nelson W.C."/>
            <person name="Umayam L.A."/>
            <person name="Ermolaeva M.D."/>
            <person name="Salzberg S.L."/>
            <person name="Delcher A."/>
            <person name="Utterback T.R."/>
            <person name="Weidman J.F."/>
            <person name="Khouri H.M."/>
            <person name="Gill J."/>
            <person name="Mikula A."/>
            <person name="Bishai W."/>
            <person name="Jacobs W.R. Jr."/>
            <person name="Venter J.C."/>
            <person name="Fraser C.M."/>
        </authorList>
    </citation>
    <scope>NUCLEOTIDE SEQUENCE [LARGE SCALE GENOMIC DNA]</scope>
    <source>
        <strain>CDC 1551 / Oshkosh</strain>
    </source>
</reference>
<dbReference type="EC" id="5.6.1.7" evidence="3"/>
<dbReference type="EMBL" id="AE000516">
    <property type="protein sequence ID" value="AAK44679.1"/>
    <property type="molecule type" value="Genomic_DNA"/>
</dbReference>
<dbReference type="PIR" id="A26950">
    <property type="entry name" value="A26950"/>
</dbReference>
<dbReference type="SMR" id="P9WPE6"/>
<dbReference type="KEGG" id="mtc:MT0456"/>
<dbReference type="PATRIC" id="fig|83331.31.peg.483"/>
<dbReference type="HOGENOM" id="CLU_016503_3_0_11"/>
<dbReference type="Proteomes" id="UP000001020">
    <property type="component" value="Chromosome"/>
</dbReference>
<dbReference type="GO" id="GO:0042603">
    <property type="term" value="C:capsule"/>
    <property type="evidence" value="ECO:0007669"/>
    <property type="project" value="UniProtKB-SubCell"/>
</dbReference>
<dbReference type="GO" id="GO:0009986">
    <property type="term" value="C:cell surface"/>
    <property type="evidence" value="ECO:0007669"/>
    <property type="project" value="UniProtKB-SubCell"/>
</dbReference>
<dbReference type="GO" id="GO:0005737">
    <property type="term" value="C:cytoplasm"/>
    <property type="evidence" value="ECO:0007669"/>
    <property type="project" value="UniProtKB-UniRule"/>
</dbReference>
<dbReference type="GO" id="GO:0005576">
    <property type="term" value="C:extracellular region"/>
    <property type="evidence" value="ECO:0007669"/>
    <property type="project" value="UniProtKB-KW"/>
</dbReference>
<dbReference type="GO" id="GO:0005524">
    <property type="term" value="F:ATP binding"/>
    <property type="evidence" value="ECO:0007669"/>
    <property type="project" value="UniProtKB-UniRule"/>
</dbReference>
<dbReference type="GO" id="GO:0140662">
    <property type="term" value="F:ATP-dependent protein folding chaperone"/>
    <property type="evidence" value="ECO:0007669"/>
    <property type="project" value="InterPro"/>
</dbReference>
<dbReference type="GO" id="GO:0016853">
    <property type="term" value="F:isomerase activity"/>
    <property type="evidence" value="ECO:0007669"/>
    <property type="project" value="UniProtKB-KW"/>
</dbReference>
<dbReference type="GO" id="GO:0051082">
    <property type="term" value="F:unfolded protein binding"/>
    <property type="evidence" value="ECO:0007669"/>
    <property type="project" value="UniProtKB-UniRule"/>
</dbReference>
<dbReference type="GO" id="GO:0042026">
    <property type="term" value="P:protein refolding"/>
    <property type="evidence" value="ECO:0007669"/>
    <property type="project" value="UniProtKB-UniRule"/>
</dbReference>
<dbReference type="CDD" id="cd03344">
    <property type="entry name" value="GroEL"/>
    <property type="match status" value="1"/>
</dbReference>
<dbReference type="FunFam" id="3.50.7.10:FF:000001">
    <property type="entry name" value="60 kDa chaperonin"/>
    <property type="match status" value="1"/>
</dbReference>
<dbReference type="Gene3D" id="3.50.7.10">
    <property type="entry name" value="GroEL"/>
    <property type="match status" value="1"/>
</dbReference>
<dbReference type="Gene3D" id="1.10.560.10">
    <property type="entry name" value="GroEL-like equatorial domain"/>
    <property type="match status" value="1"/>
</dbReference>
<dbReference type="Gene3D" id="3.30.260.10">
    <property type="entry name" value="TCP-1-like chaperonin intermediate domain"/>
    <property type="match status" value="1"/>
</dbReference>
<dbReference type="HAMAP" id="MF_00600">
    <property type="entry name" value="CH60"/>
    <property type="match status" value="1"/>
</dbReference>
<dbReference type="InterPro" id="IPR018370">
    <property type="entry name" value="Chaperonin_Cpn60_CS"/>
</dbReference>
<dbReference type="InterPro" id="IPR001844">
    <property type="entry name" value="Cpn60/GroEL"/>
</dbReference>
<dbReference type="InterPro" id="IPR002423">
    <property type="entry name" value="Cpn60/GroEL/TCP-1"/>
</dbReference>
<dbReference type="InterPro" id="IPR027409">
    <property type="entry name" value="GroEL-like_apical_dom_sf"/>
</dbReference>
<dbReference type="InterPro" id="IPR027413">
    <property type="entry name" value="GROEL-like_equatorial_sf"/>
</dbReference>
<dbReference type="InterPro" id="IPR027410">
    <property type="entry name" value="TCP-1-like_intermed_sf"/>
</dbReference>
<dbReference type="NCBIfam" id="TIGR02348">
    <property type="entry name" value="GroEL"/>
    <property type="match status" value="1"/>
</dbReference>
<dbReference type="NCBIfam" id="NF000592">
    <property type="entry name" value="PRK00013.1"/>
    <property type="match status" value="1"/>
</dbReference>
<dbReference type="NCBIfam" id="NF009487">
    <property type="entry name" value="PRK12849.1"/>
    <property type="match status" value="1"/>
</dbReference>
<dbReference type="NCBIfam" id="NF009488">
    <property type="entry name" value="PRK12850.1"/>
    <property type="match status" value="1"/>
</dbReference>
<dbReference type="NCBIfam" id="NF009489">
    <property type="entry name" value="PRK12851.1"/>
    <property type="match status" value="1"/>
</dbReference>
<dbReference type="PANTHER" id="PTHR45633">
    <property type="entry name" value="60 KDA HEAT SHOCK PROTEIN, MITOCHONDRIAL"/>
    <property type="match status" value="1"/>
</dbReference>
<dbReference type="Pfam" id="PF00118">
    <property type="entry name" value="Cpn60_TCP1"/>
    <property type="match status" value="1"/>
</dbReference>
<dbReference type="PRINTS" id="PR00298">
    <property type="entry name" value="CHAPERONIN60"/>
</dbReference>
<dbReference type="SUPFAM" id="SSF52029">
    <property type="entry name" value="GroEL apical domain-like"/>
    <property type="match status" value="1"/>
</dbReference>
<dbReference type="SUPFAM" id="SSF48592">
    <property type="entry name" value="GroEL equatorial domain-like"/>
    <property type="match status" value="2"/>
</dbReference>
<dbReference type="PROSITE" id="PS00296">
    <property type="entry name" value="CHAPERONINS_CPN60"/>
    <property type="match status" value="1"/>
</dbReference>
<gene>
    <name evidence="3" type="primary">groEL2</name>
    <name evidence="3" type="synonym">groL2</name>
    <name type="synonym">hsp65</name>
    <name type="ordered locus">MT0456</name>
</gene>
<organism>
    <name type="scientific">Mycobacterium tuberculosis (strain CDC 1551 / Oshkosh)</name>
    <dbReference type="NCBI Taxonomy" id="83331"/>
    <lineage>
        <taxon>Bacteria</taxon>
        <taxon>Bacillati</taxon>
        <taxon>Actinomycetota</taxon>
        <taxon>Actinomycetes</taxon>
        <taxon>Mycobacteriales</taxon>
        <taxon>Mycobacteriaceae</taxon>
        <taxon>Mycobacterium</taxon>
        <taxon>Mycobacterium tuberculosis complex</taxon>
    </lineage>
</organism>
<feature type="initiator methionine" description="Removed" evidence="1">
    <location>
        <position position="1"/>
    </location>
</feature>
<feature type="chain" id="PRO_0000426965" description="Chaperonin GroEL 2">
    <location>
        <begin position="2"/>
        <end position="540"/>
    </location>
</feature>
<feature type="region of interest" description="Disordered" evidence="4">
    <location>
        <begin position="521"/>
        <end position="540"/>
    </location>
</feature>
<feature type="compositionally biased region" description="Gly residues" evidence="4">
    <location>
        <begin position="530"/>
        <end position="540"/>
    </location>
</feature>
<feature type="binding site" evidence="3">
    <location>
        <begin position="29"/>
        <end position="32"/>
    </location>
    <ligand>
        <name>ATP</name>
        <dbReference type="ChEBI" id="CHEBI:30616"/>
    </ligand>
</feature>
<feature type="binding site" evidence="3">
    <location>
        <begin position="86"/>
        <end position="90"/>
    </location>
    <ligand>
        <name>ATP</name>
        <dbReference type="ChEBI" id="CHEBI:30616"/>
    </ligand>
</feature>
<feature type="binding site" evidence="3">
    <location>
        <position position="413"/>
    </location>
    <ligand>
        <name>ATP</name>
        <dbReference type="ChEBI" id="CHEBI:30616"/>
    </ligand>
</feature>
<feature type="binding site" evidence="3">
    <location>
        <position position="492"/>
    </location>
    <ligand>
        <name>ATP</name>
        <dbReference type="ChEBI" id="CHEBI:30616"/>
    </ligand>
</feature>
<accession>P9WPE6</accession>
<accession>L0T3Q6</accession>
<accession>P06806</accession>
<accession>P0A520</accession>
<accession>Q48920</accession>
<accession>Q48931</accession>
<keyword id="KW-0067">ATP-binding</keyword>
<keyword id="KW-0134">Cell wall</keyword>
<keyword id="KW-0143">Chaperone</keyword>
<keyword id="KW-0413">Isomerase</keyword>
<keyword id="KW-0547">Nucleotide-binding</keyword>
<keyword id="KW-1185">Reference proteome</keyword>
<keyword id="KW-0964">Secreted</keyword>
<sequence>MAKTIAYDEEARRGLERGLNALADAVKVTLGPKGRNVVLEKKWGAPTITNDGVSIAKEIELEDPYEKIGAELVKEVAKKTDDVAGDGTTTATVLAQALVREGLRNVAAGANPLGLKRGIEKAVEKVTETLLKGAKEVETKEQIAATAAISAGDQSIGDLIAEAMDKVGNEGVITVEESNTFGLQLELTEGMRFDKGYISGYFVTDPERQEAVLEDPYILLVSSKVSTVKDLLPLLEKVIGAGKPLLIIAEDVEGEALSTLVVNKIRGTFKSVAVKAPGFGDRRKAMLQDMAILTGGQVISEEVGLTLENADLSLLGKARKVVVTKDETTIVEGAGDTDAIAGRVAQIRQEIENSDSDYDREKLQERLAKLAGGVAVIKAGAATEVELKERKHRIEDAVRNAKAAVEEGIVAGGGVTLLQAAPTLDELKLEGDEATGANIVKVALEAPLKQIAFNSGLEPGVVAEKVRNLPAGHGLNAQTGVYEDLLAAGVADPVKVTRSALQNAASIAGLFLTTEAVVADKPEKEKASVPGGGDMGGMDF</sequence>
<evidence type="ECO:0000250" key="1"/>
<evidence type="ECO:0000250" key="2">
    <source>
        <dbReference type="UniProtKB" id="P9WPE7"/>
    </source>
</evidence>
<evidence type="ECO:0000255" key="3">
    <source>
        <dbReference type="HAMAP-Rule" id="MF_00600"/>
    </source>
</evidence>
<evidence type="ECO:0000256" key="4">
    <source>
        <dbReference type="SAM" id="MobiDB-lite"/>
    </source>
</evidence>
<name>CH602_MYCTO</name>
<protein>
    <recommendedName>
        <fullName evidence="3">Chaperonin GroEL 2</fullName>
        <ecNumber evidence="3">5.6.1.7</ecNumber>
    </recommendedName>
    <alternativeName>
        <fullName evidence="3">60 kDa chaperonin 2</fullName>
    </alternativeName>
    <alternativeName>
        <fullName>65 kDa antigen</fullName>
    </alternativeName>
    <alternativeName>
        <fullName>Antigen A</fullName>
    </alternativeName>
    <alternativeName>
        <fullName>Cell wall protein A</fullName>
    </alternativeName>
    <alternativeName>
        <fullName evidence="3">Chaperonin-60 2</fullName>
        <shortName evidence="3">Cpn60 2</shortName>
    </alternativeName>
    <alternativeName>
        <fullName>Heat shock protein 65</fullName>
    </alternativeName>
</protein>